<evidence type="ECO:0000255" key="1">
    <source>
        <dbReference type="HAMAP-Rule" id="MF_00165"/>
    </source>
</evidence>
<evidence type="ECO:0007829" key="2">
    <source>
        <dbReference type="PDB" id="3LD9"/>
    </source>
</evidence>
<name>KTHY_EHRCR</name>
<protein>
    <recommendedName>
        <fullName evidence="1">Thymidylate kinase</fullName>
        <ecNumber evidence="1">2.7.4.9</ecNumber>
    </recommendedName>
    <alternativeName>
        <fullName evidence="1">dTMP kinase</fullName>
    </alternativeName>
</protein>
<reference key="1">
    <citation type="journal article" date="2006" name="PLoS Genet.">
        <title>Comparative genomics of emerging human ehrlichiosis agents.</title>
        <authorList>
            <person name="Dunning Hotopp J.C."/>
            <person name="Lin M."/>
            <person name="Madupu R."/>
            <person name="Crabtree J."/>
            <person name="Angiuoli S.V."/>
            <person name="Eisen J.A."/>
            <person name="Seshadri R."/>
            <person name="Ren Q."/>
            <person name="Wu M."/>
            <person name="Utterback T.R."/>
            <person name="Smith S."/>
            <person name="Lewis M."/>
            <person name="Khouri H."/>
            <person name="Zhang C."/>
            <person name="Niu H."/>
            <person name="Lin Q."/>
            <person name="Ohashi N."/>
            <person name="Zhi N."/>
            <person name="Nelson W.C."/>
            <person name="Brinkac L.M."/>
            <person name="Dodson R.J."/>
            <person name="Rosovitz M.J."/>
            <person name="Sundaram J.P."/>
            <person name="Daugherty S.C."/>
            <person name="Davidsen T."/>
            <person name="Durkin A.S."/>
            <person name="Gwinn M.L."/>
            <person name="Haft D.H."/>
            <person name="Selengut J.D."/>
            <person name="Sullivan S.A."/>
            <person name="Zafar N."/>
            <person name="Zhou L."/>
            <person name="Benahmed F."/>
            <person name="Forberger H."/>
            <person name="Halpin R."/>
            <person name="Mulligan S."/>
            <person name="Robinson J."/>
            <person name="White O."/>
            <person name="Rikihisa Y."/>
            <person name="Tettelin H."/>
        </authorList>
    </citation>
    <scope>NUCLEOTIDE SEQUENCE [LARGE SCALE GENOMIC DNA]</scope>
    <source>
        <strain>ATCC CRL-10679 / Arkansas</strain>
    </source>
</reference>
<organism>
    <name type="scientific">Ehrlichia chaffeensis (strain ATCC CRL-10679 / Arkansas)</name>
    <dbReference type="NCBI Taxonomy" id="205920"/>
    <lineage>
        <taxon>Bacteria</taxon>
        <taxon>Pseudomonadati</taxon>
        <taxon>Pseudomonadota</taxon>
        <taxon>Alphaproteobacteria</taxon>
        <taxon>Rickettsiales</taxon>
        <taxon>Anaplasmataceae</taxon>
        <taxon>Ehrlichia</taxon>
    </lineage>
</organism>
<proteinExistence type="evidence at protein level"/>
<keyword id="KW-0002">3D-structure</keyword>
<keyword id="KW-0067">ATP-binding</keyword>
<keyword id="KW-0418">Kinase</keyword>
<keyword id="KW-0545">Nucleotide biosynthesis</keyword>
<keyword id="KW-0547">Nucleotide-binding</keyword>
<keyword id="KW-1185">Reference proteome</keyword>
<keyword id="KW-0808">Transferase</keyword>
<comment type="function">
    <text evidence="1">Phosphorylation of dTMP to form dTDP in both de novo and salvage pathways of dTTP synthesis.</text>
</comment>
<comment type="catalytic activity">
    <reaction evidence="1">
        <text>dTMP + ATP = dTDP + ADP</text>
        <dbReference type="Rhea" id="RHEA:13517"/>
        <dbReference type="ChEBI" id="CHEBI:30616"/>
        <dbReference type="ChEBI" id="CHEBI:58369"/>
        <dbReference type="ChEBI" id="CHEBI:63528"/>
        <dbReference type="ChEBI" id="CHEBI:456216"/>
        <dbReference type="EC" id="2.7.4.9"/>
    </reaction>
</comment>
<comment type="similarity">
    <text evidence="1">Belongs to the thymidylate kinase family.</text>
</comment>
<feature type="chain" id="PRO_1000023190" description="Thymidylate kinase">
    <location>
        <begin position="1"/>
        <end position="202"/>
    </location>
</feature>
<feature type="binding site" evidence="1">
    <location>
        <begin position="7"/>
        <end position="14"/>
    </location>
    <ligand>
        <name>ATP</name>
        <dbReference type="ChEBI" id="CHEBI:30616"/>
    </ligand>
</feature>
<feature type="strand" evidence="2">
    <location>
        <begin position="1"/>
        <end position="6"/>
    </location>
</feature>
<feature type="helix" evidence="2">
    <location>
        <begin position="13"/>
        <end position="28"/>
    </location>
</feature>
<feature type="helix" evidence="2">
    <location>
        <begin position="30"/>
        <end position="32"/>
    </location>
</feature>
<feature type="strand" evidence="2">
    <location>
        <begin position="33"/>
        <end position="39"/>
    </location>
</feature>
<feature type="helix" evidence="2">
    <location>
        <begin position="43"/>
        <end position="53"/>
    </location>
</feature>
<feature type="helix" evidence="2">
    <location>
        <begin position="60"/>
        <end position="77"/>
    </location>
</feature>
<feature type="helix" evidence="2">
    <location>
        <begin position="79"/>
        <end position="84"/>
    </location>
</feature>
<feature type="strand" evidence="2">
    <location>
        <begin position="88"/>
        <end position="93"/>
    </location>
</feature>
<feature type="helix" evidence="2">
    <location>
        <begin position="95"/>
        <end position="102"/>
    </location>
</feature>
<feature type="turn" evidence="2">
    <location>
        <begin position="103"/>
        <end position="106"/>
    </location>
</feature>
<feature type="helix" evidence="2">
    <location>
        <begin position="110"/>
        <end position="120"/>
    </location>
</feature>
<feature type="strand" evidence="2">
    <location>
        <begin position="126"/>
        <end position="132"/>
    </location>
</feature>
<feature type="helix" evidence="2">
    <location>
        <begin position="152"/>
        <end position="168"/>
    </location>
</feature>
<feature type="turn" evidence="2">
    <location>
        <begin position="170"/>
        <end position="172"/>
    </location>
</feature>
<feature type="strand" evidence="2">
    <location>
        <begin position="173"/>
        <end position="179"/>
    </location>
</feature>
<feature type="strand" evidence="2">
    <location>
        <begin position="181"/>
        <end position="183"/>
    </location>
</feature>
<feature type="helix" evidence="2">
    <location>
        <begin position="187"/>
        <end position="199"/>
    </location>
</feature>
<sequence length="202" mass="23199">MFITFEGIDGSGKTTQSHLLAEYLSEIYGVNNVVLTREPGGTLLNESVRNLLFKAQGLDSLSELLFFIAMRREHFVKIIKPSLMQKKIVICDRFIDSTIAYQGYGQGIDCSLIDQLNDLVIDVYPDITFIIDVDINESLSRSCKNGYEFADMEFYYRVRDGFYDIAKKNPHRCHVITDKSETYDIDDINFVHLEVIKVLQMV</sequence>
<accession>Q2GHN3</accession>
<gene>
    <name evidence="1" type="primary">tmk</name>
    <name type="ordered locus">ECH_0229</name>
</gene>
<dbReference type="EC" id="2.7.4.9" evidence="1"/>
<dbReference type="EMBL" id="CP000236">
    <property type="protein sequence ID" value="ABD45252.1"/>
    <property type="molecule type" value="Genomic_DNA"/>
</dbReference>
<dbReference type="RefSeq" id="WP_006010009.1">
    <property type="nucleotide sequence ID" value="NC_007799.1"/>
</dbReference>
<dbReference type="PDB" id="3LD9">
    <property type="method" value="X-ray"/>
    <property type="resolution" value="2.15 A"/>
    <property type="chains" value="A/B/C/D=1-202"/>
</dbReference>
<dbReference type="PDBsum" id="3LD9"/>
<dbReference type="SMR" id="Q2GHN3"/>
<dbReference type="STRING" id="205920.ECH_0229"/>
<dbReference type="KEGG" id="ech:ECH_0229"/>
<dbReference type="eggNOG" id="COG0125">
    <property type="taxonomic scope" value="Bacteria"/>
</dbReference>
<dbReference type="HOGENOM" id="CLU_049131_0_0_5"/>
<dbReference type="OrthoDB" id="9774907at2"/>
<dbReference type="BRENDA" id="2.7.4.9">
    <property type="organism ID" value="2043"/>
</dbReference>
<dbReference type="EvolutionaryTrace" id="Q2GHN3"/>
<dbReference type="Proteomes" id="UP000008320">
    <property type="component" value="Chromosome"/>
</dbReference>
<dbReference type="GO" id="GO:0005829">
    <property type="term" value="C:cytosol"/>
    <property type="evidence" value="ECO:0007669"/>
    <property type="project" value="TreeGrafter"/>
</dbReference>
<dbReference type="GO" id="GO:0005524">
    <property type="term" value="F:ATP binding"/>
    <property type="evidence" value="ECO:0007669"/>
    <property type="project" value="UniProtKB-UniRule"/>
</dbReference>
<dbReference type="GO" id="GO:0004798">
    <property type="term" value="F:dTMP kinase activity"/>
    <property type="evidence" value="ECO:0007669"/>
    <property type="project" value="UniProtKB-UniRule"/>
</dbReference>
<dbReference type="GO" id="GO:0006233">
    <property type="term" value="P:dTDP biosynthetic process"/>
    <property type="evidence" value="ECO:0007669"/>
    <property type="project" value="InterPro"/>
</dbReference>
<dbReference type="GO" id="GO:0006235">
    <property type="term" value="P:dTTP biosynthetic process"/>
    <property type="evidence" value="ECO:0007669"/>
    <property type="project" value="UniProtKB-UniRule"/>
</dbReference>
<dbReference type="GO" id="GO:0006227">
    <property type="term" value="P:dUDP biosynthetic process"/>
    <property type="evidence" value="ECO:0007669"/>
    <property type="project" value="TreeGrafter"/>
</dbReference>
<dbReference type="CDD" id="cd01672">
    <property type="entry name" value="TMPK"/>
    <property type="match status" value="1"/>
</dbReference>
<dbReference type="FunFam" id="3.40.50.300:FF:000225">
    <property type="entry name" value="Thymidylate kinase"/>
    <property type="match status" value="1"/>
</dbReference>
<dbReference type="Gene3D" id="3.40.50.300">
    <property type="entry name" value="P-loop containing nucleotide triphosphate hydrolases"/>
    <property type="match status" value="1"/>
</dbReference>
<dbReference type="HAMAP" id="MF_00165">
    <property type="entry name" value="Thymidylate_kinase"/>
    <property type="match status" value="1"/>
</dbReference>
<dbReference type="InterPro" id="IPR027417">
    <property type="entry name" value="P-loop_NTPase"/>
</dbReference>
<dbReference type="InterPro" id="IPR039430">
    <property type="entry name" value="Thymidylate_kin-like_dom"/>
</dbReference>
<dbReference type="InterPro" id="IPR018095">
    <property type="entry name" value="Thymidylate_kin_CS"/>
</dbReference>
<dbReference type="InterPro" id="IPR018094">
    <property type="entry name" value="Thymidylate_kinase"/>
</dbReference>
<dbReference type="NCBIfam" id="TIGR00041">
    <property type="entry name" value="DTMP_kinase"/>
    <property type="match status" value="1"/>
</dbReference>
<dbReference type="PANTHER" id="PTHR10344">
    <property type="entry name" value="THYMIDYLATE KINASE"/>
    <property type="match status" value="1"/>
</dbReference>
<dbReference type="PANTHER" id="PTHR10344:SF4">
    <property type="entry name" value="UMP-CMP KINASE 2, MITOCHONDRIAL"/>
    <property type="match status" value="1"/>
</dbReference>
<dbReference type="Pfam" id="PF02223">
    <property type="entry name" value="Thymidylate_kin"/>
    <property type="match status" value="1"/>
</dbReference>
<dbReference type="SUPFAM" id="SSF52540">
    <property type="entry name" value="P-loop containing nucleoside triphosphate hydrolases"/>
    <property type="match status" value="1"/>
</dbReference>
<dbReference type="PROSITE" id="PS01331">
    <property type="entry name" value="THYMIDYLATE_KINASE"/>
    <property type="match status" value="1"/>
</dbReference>